<proteinExistence type="inferred from homology"/>
<protein>
    <recommendedName>
        <fullName evidence="1">Tryptophan synthase beta chain</fullName>
        <ecNumber evidence="1">4.2.1.20</ecNumber>
    </recommendedName>
</protein>
<sequence length="397" mass="42997">MTTLLNPYFGEFGGMYVPQILMPALRQLEEAFVSAQKDPEFQAQFNDLLKNYAGRPTALTKCQNITAGTNTTLYLKREDLLHGGAHKTNQVLGQALLAKRMGKTEIIAETGAGQHGVASALASALLGLKCRIYMGAKDVERQSPNVFRMRLMGAEVIPVHSGSATLKDACNEALRDWSGSYETAHYMLGTAAGPHPYPTIVREFQRMIGEETKAQILEREGRLPDAVIACVGGGSNAIGMFADFINETNVGLIGVEPGGHGIETGEHGAPLKHGRVGIYFGMKAPMMQTEDGQIEESYSISAGLDFPSVGPQHAYLNSTGRADYVSITDDEALEAFKTLCLHEGIIPALESSHALAHALKMMRENPEKEQLLVVNLSGRGDKDIFTVHDILKARGEI</sequence>
<gene>
    <name evidence="1" type="primary">trpB</name>
    <name type="ordered locus">SSON_1882</name>
</gene>
<reference key="1">
    <citation type="journal article" date="2005" name="Nucleic Acids Res.">
        <title>Genome dynamics and diversity of Shigella species, the etiologic agents of bacillary dysentery.</title>
        <authorList>
            <person name="Yang F."/>
            <person name="Yang J."/>
            <person name="Zhang X."/>
            <person name="Chen L."/>
            <person name="Jiang Y."/>
            <person name="Yan Y."/>
            <person name="Tang X."/>
            <person name="Wang J."/>
            <person name="Xiong Z."/>
            <person name="Dong J."/>
            <person name="Xue Y."/>
            <person name="Zhu Y."/>
            <person name="Xu X."/>
            <person name="Sun L."/>
            <person name="Chen S."/>
            <person name="Nie H."/>
            <person name="Peng J."/>
            <person name="Xu J."/>
            <person name="Wang Y."/>
            <person name="Yuan Z."/>
            <person name="Wen Y."/>
            <person name="Yao Z."/>
            <person name="Shen Y."/>
            <person name="Qiang B."/>
            <person name="Hou Y."/>
            <person name="Yu J."/>
            <person name="Jin Q."/>
        </authorList>
    </citation>
    <scope>NUCLEOTIDE SEQUENCE [LARGE SCALE GENOMIC DNA]</scope>
    <source>
        <strain>Ss046</strain>
    </source>
</reference>
<evidence type="ECO:0000255" key="1">
    <source>
        <dbReference type="HAMAP-Rule" id="MF_00133"/>
    </source>
</evidence>
<dbReference type="EC" id="4.2.1.20" evidence="1"/>
<dbReference type="EMBL" id="CP000038">
    <property type="protein sequence ID" value="AAZ88553.1"/>
    <property type="molecule type" value="Genomic_DNA"/>
</dbReference>
<dbReference type="RefSeq" id="WP_000209521.1">
    <property type="nucleotide sequence ID" value="NC_007384.1"/>
</dbReference>
<dbReference type="SMR" id="Q3Z109"/>
<dbReference type="GeneID" id="93775380"/>
<dbReference type="KEGG" id="ssn:SSON_1882"/>
<dbReference type="HOGENOM" id="CLU_016734_3_1_6"/>
<dbReference type="UniPathway" id="UPA00035">
    <property type="reaction ID" value="UER00044"/>
</dbReference>
<dbReference type="Proteomes" id="UP000002529">
    <property type="component" value="Chromosome"/>
</dbReference>
<dbReference type="GO" id="GO:0005737">
    <property type="term" value="C:cytoplasm"/>
    <property type="evidence" value="ECO:0007669"/>
    <property type="project" value="TreeGrafter"/>
</dbReference>
<dbReference type="GO" id="GO:0004834">
    <property type="term" value="F:tryptophan synthase activity"/>
    <property type="evidence" value="ECO:0007669"/>
    <property type="project" value="UniProtKB-UniRule"/>
</dbReference>
<dbReference type="CDD" id="cd06446">
    <property type="entry name" value="Trp-synth_B"/>
    <property type="match status" value="1"/>
</dbReference>
<dbReference type="FunFam" id="3.40.50.1100:FF:000001">
    <property type="entry name" value="Tryptophan synthase beta chain"/>
    <property type="match status" value="1"/>
</dbReference>
<dbReference type="FunFam" id="3.40.50.1100:FF:000004">
    <property type="entry name" value="Tryptophan synthase beta chain"/>
    <property type="match status" value="1"/>
</dbReference>
<dbReference type="Gene3D" id="3.40.50.1100">
    <property type="match status" value="2"/>
</dbReference>
<dbReference type="HAMAP" id="MF_00133">
    <property type="entry name" value="Trp_synth_beta"/>
    <property type="match status" value="1"/>
</dbReference>
<dbReference type="InterPro" id="IPR006653">
    <property type="entry name" value="Trp_synth_b_CS"/>
</dbReference>
<dbReference type="InterPro" id="IPR006654">
    <property type="entry name" value="Trp_synth_beta"/>
</dbReference>
<dbReference type="InterPro" id="IPR023026">
    <property type="entry name" value="Trp_synth_beta/beta-like"/>
</dbReference>
<dbReference type="InterPro" id="IPR001926">
    <property type="entry name" value="TrpB-like_PALP"/>
</dbReference>
<dbReference type="InterPro" id="IPR036052">
    <property type="entry name" value="TrpB-like_PALP_sf"/>
</dbReference>
<dbReference type="NCBIfam" id="TIGR00263">
    <property type="entry name" value="trpB"/>
    <property type="match status" value="1"/>
</dbReference>
<dbReference type="PANTHER" id="PTHR48077:SF3">
    <property type="entry name" value="TRYPTOPHAN SYNTHASE"/>
    <property type="match status" value="1"/>
</dbReference>
<dbReference type="PANTHER" id="PTHR48077">
    <property type="entry name" value="TRYPTOPHAN SYNTHASE-RELATED"/>
    <property type="match status" value="1"/>
</dbReference>
<dbReference type="Pfam" id="PF00291">
    <property type="entry name" value="PALP"/>
    <property type="match status" value="1"/>
</dbReference>
<dbReference type="PIRSF" id="PIRSF001413">
    <property type="entry name" value="Trp_syn_beta"/>
    <property type="match status" value="1"/>
</dbReference>
<dbReference type="SUPFAM" id="SSF53686">
    <property type="entry name" value="Tryptophan synthase beta subunit-like PLP-dependent enzymes"/>
    <property type="match status" value="1"/>
</dbReference>
<dbReference type="PROSITE" id="PS00168">
    <property type="entry name" value="TRP_SYNTHASE_BETA"/>
    <property type="match status" value="1"/>
</dbReference>
<feature type="chain" id="PRO_1000018399" description="Tryptophan synthase beta chain">
    <location>
        <begin position="1"/>
        <end position="397"/>
    </location>
</feature>
<feature type="modified residue" description="N6-(pyridoxal phosphate)lysine" evidence="1">
    <location>
        <position position="87"/>
    </location>
</feature>
<organism>
    <name type="scientific">Shigella sonnei (strain Ss046)</name>
    <dbReference type="NCBI Taxonomy" id="300269"/>
    <lineage>
        <taxon>Bacteria</taxon>
        <taxon>Pseudomonadati</taxon>
        <taxon>Pseudomonadota</taxon>
        <taxon>Gammaproteobacteria</taxon>
        <taxon>Enterobacterales</taxon>
        <taxon>Enterobacteriaceae</taxon>
        <taxon>Shigella</taxon>
    </lineage>
</organism>
<accession>Q3Z109</accession>
<keyword id="KW-0028">Amino-acid biosynthesis</keyword>
<keyword id="KW-0057">Aromatic amino acid biosynthesis</keyword>
<keyword id="KW-0456">Lyase</keyword>
<keyword id="KW-0663">Pyridoxal phosphate</keyword>
<keyword id="KW-1185">Reference proteome</keyword>
<keyword id="KW-0822">Tryptophan biosynthesis</keyword>
<comment type="function">
    <text evidence="1">The beta subunit is responsible for the synthesis of L-tryptophan from indole and L-serine.</text>
</comment>
<comment type="catalytic activity">
    <reaction evidence="1">
        <text>(1S,2R)-1-C-(indol-3-yl)glycerol 3-phosphate + L-serine = D-glyceraldehyde 3-phosphate + L-tryptophan + H2O</text>
        <dbReference type="Rhea" id="RHEA:10532"/>
        <dbReference type="ChEBI" id="CHEBI:15377"/>
        <dbReference type="ChEBI" id="CHEBI:33384"/>
        <dbReference type="ChEBI" id="CHEBI:57912"/>
        <dbReference type="ChEBI" id="CHEBI:58866"/>
        <dbReference type="ChEBI" id="CHEBI:59776"/>
        <dbReference type="EC" id="4.2.1.20"/>
    </reaction>
</comment>
<comment type="cofactor">
    <cofactor evidence="1">
        <name>pyridoxal 5'-phosphate</name>
        <dbReference type="ChEBI" id="CHEBI:597326"/>
    </cofactor>
</comment>
<comment type="pathway">
    <text evidence="1">Amino-acid biosynthesis; L-tryptophan biosynthesis; L-tryptophan from chorismate: step 5/5.</text>
</comment>
<comment type="subunit">
    <text evidence="1">Tetramer of two alpha and two beta chains.</text>
</comment>
<comment type="similarity">
    <text evidence="1">Belongs to the TrpB family.</text>
</comment>
<name>TRPB_SHISS</name>